<evidence type="ECO:0000250" key="1"/>
<evidence type="ECO:0000255" key="2">
    <source>
        <dbReference type="PROSITE-ProRule" id="PRU00691"/>
    </source>
</evidence>
<evidence type="ECO:0000305" key="3"/>
<gene>
    <name type="primary">trxA</name>
    <name type="synonym">trx</name>
</gene>
<accession>P37395</accession>
<protein>
    <recommendedName>
        <fullName>Thioredoxin</fullName>
        <shortName>Trx</shortName>
    </recommendedName>
</protein>
<reference key="1">
    <citation type="submission" date="1993-02" db="EMBL/GenBank/DDBJ databases">
        <title>A thioredoxin gene is located upstream of rbcLS in the unicellular red alga Cyanidium caldarium, strain RK-1.</title>
        <authorList>
            <person name="Langsdorf A."/>
            <person name="Emich A."/>
            <person name="Zetsche K."/>
        </authorList>
    </citation>
    <scope>NUCLEOTIDE SEQUENCE [GENOMIC DNA]</scope>
    <source>
        <strain>RK-1</strain>
    </source>
</reference>
<reference key="2">
    <citation type="journal article" date="2000" name="J. Mol. Evol.">
        <title>The structure and gene repertoire of an ancient red algal plastid genome.</title>
        <authorList>
            <person name="Gloeckner G."/>
            <person name="Rosenthal A."/>
            <person name="Valentin K.-U."/>
        </authorList>
    </citation>
    <scope>NUCLEOTIDE SEQUENCE [LARGE SCALE GENOMIC DNA]</scope>
    <source>
        <strain>RK-1</strain>
    </source>
</reference>
<organism>
    <name type="scientific">Cyanidium caldarium</name>
    <name type="common">Red alga</name>
    <dbReference type="NCBI Taxonomy" id="2771"/>
    <lineage>
        <taxon>Eukaryota</taxon>
        <taxon>Rhodophyta</taxon>
        <taxon>Bangiophyceae</taxon>
        <taxon>Cyanidiales</taxon>
        <taxon>Cyanidiaceae</taxon>
        <taxon>Cyanidium</taxon>
    </lineage>
</organism>
<dbReference type="EMBL" id="Z21723">
    <property type="protein sequence ID" value="CAA79820.1"/>
    <property type="molecule type" value="Genomic_DNA"/>
</dbReference>
<dbReference type="EMBL" id="AF022186">
    <property type="protein sequence ID" value="AAF12961.1"/>
    <property type="molecule type" value="Genomic_DNA"/>
</dbReference>
<dbReference type="PIR" id="S31915">
    <property type="entry name" value="S31915"/>
</dbReference>
<dbReference type="RefSeq" id="NP_045133.1">
    <property type="nucleotide sequence ID" value="NC_001840.1"/>
</dbReference>
<dbReference type="SMR" id="P37395"/>
<dbReference type="GeneID" id="800270"/>
<dbReference type="GO" id="GO:0009507">
    <property type="term" value="C:chloroplast"/>
    <property type="evidence" value="ECO:0007669"/>
    <property type="project" value="UniProtKB-SubCell"/>
</dbReference>
<dbReference type="GO" id="GO:0015035">
    <property type="term" value="F:protein-disulfide reductase activity"/>
    <property type="evidence" value="ECO:0007669"/>
    <property type="project" value="InterPro"/>
</dbReference>
<dbReference type="CDD" id="cd02947">
    <property type="entry name" value="TRX_family"/>
    <property type="match status" value="1"/>
</dbReference>
<dbReference type="FunFam" id="3.40.30.10:FF:000001">
    <property type="entry name" value="Thioredoxin"/>
    <property type="match status" value="1"/>
</dbReference>
<dbReference type="Gene3D" id="3.40.30.10">
    <property type="entry name" value="Glutaredoxin"/>
    <property type="match status" value="1"/>
</dbReference>
<dbReference type="InterPro" id="IPR005746">
    <property type="entry name" value="Thioredoxin"/>
</dbReference>
<dbReference type="InterPro" id="IPR036249">
    <property type="entry name" value="Thioredoxin-like_sf"/>
</dbReference>
<dbReference type="InterPro" id="IPR017937">
    <property type="entry name" value="Thioredoxin_CS"/>
</dbReference>
<dbReference type="InterPro" id="IPR013766">
    <property type="entry name" value="Thioredoxin_domain"/>
</dbReference>
<dbReference type="NCBIfam" id="TIGR01068">
    <property type="entry name" value="thioredoxin"/>
    <property type="match status" value="1"/>
</dbReference>
<dbReference type="PANTHER" id="PTHR45663">
    <property type="entry name" value="GEO12009P1"/>
    <property type="match status" value="1"/>
</dbReference>
<dbReference type="PANTHER" id="PTHR45663:SF11">
    <property type="entry name" value="GEO12009P1"/>
    <property type="match status" value="1"/>
</dbReference>
<dbReference type="Pfam" id="PF00085">
    <property type="entry name" value="Thioredoxin"/>
    <property type="match status" value="1"/>
</dbReference>
<dbReference type="PIRSF" id="PIRSF000077">
    <property type="entry name" value="Thioredoxin"/>
    <property type="match status" value="1"/>
</dbReference>
<dbReference type="PRINTS" id="PR00421">
    <property type="entry name" value="THIOREDOXIN"/>
</dbReference>
<dbReference type="SUPFAM" id="SSF52833">
    <property type="entry name" value="Thioredoxin-like"/>
    <property type="match status" value="1"/>
</dbReference>
<dbReference type="PROSITE" id="PS00194">
    <property type="entry name" value="THIOREDOXIN_1"/>
    <property type="match status" value="1"/>
</dbReference>
<dbReference type="PROSITE" id="PS51352">
    <property type="entry name" value="THIOREDOXIN_2"/>
    <property type="match status" value="1"/>
</dbReference>
<name>THIO_CYACA</name>
<geneLocation type="chloroplast"/>
<keyword id="KW-0150">Chloroplast</keyword>
<keyword id="KW-1015">Disulfide bond</keyword>
<keyword id="KW-0249">Electron transport</keyword>
<keyword id="KW-0934">Plastid</keyword>
<keyword id="KW-0676">Redox-active center</keyword>
<keyword id="KW-0813">Transport</keyword>
<sequence>MPSPIQVTDFSFEKEVVNSEKLVLVDFWAPWCGPCRMISPVIDELAQEYVEQVKIVKINTDENPSISAEYGIRSIPTLMLFKDGKRVDTVIGAVPKSTLTNALKKYL</sequence>
<feature type="chain" id="PRO_0000120067" description="Thioredoxin">
    <location>
        <begin position="1"/>
        <end position="107"/>
    </location>
</feature>
<feature type="domain" description="Thioredoxin" evidence="2">
    <location>
        <begin position="2"/>
        <end position="107"/>
    </location>
</feature>
<feature type="active site" description="Nucleophile">
    <location>
        <position position="32"/>
    </location>
</feature>
<feature type="active site" description="Nucleophile">
    <location>
        <position position="35"/>
    </location>
</feature>
<feature type="site" description="Deprotonates C-terminal active site Cys" evidence="1">
    <location>
        <position position="26"/>
    </location>
</feature>
<feature type="site" description="Contributes to redox potential value">
    <location>
        <position position="33"/>
    </location>
</feature>
<feature type="site" description="Contributes to redox potential value">
    <location>
        <position position="34"/>
    </location>
</feature>
<feature type="disulfide bond" description="Redox-active" evidence="2">
    <location>
        <begin position="32"/>
        <end position="35"/>
    </location>
</feature>
<proteinExistence type="inferred from homology"/>
<comment type="function">
    <text>Participates in various redox reactions through the reversible oxidation of its active center dithiol to a disulfide and catalyzes dithiol-disulfide exchange reactions.</text>
</comment>
<comment type="subcellular location">
    <subcellularLocation>
        <location>Plastid</location>
        <location>Chloroplast</location>
    </subcellularLocation>
</comment>
<comment type="similarity">
    <text evidence="3">Belongs to the thioredoxin family.</text>
</comment>